<comment type="catalytic activity">
    <reaction evidence="1">
        <text>D-glucose + ATP = D-glucose 6-phosphate + ADP + H(+)</text>
        <dbReference type="Rhea" id="RHEA:17825"/>
        <dbReference type="ChEBI" id="CHEBI:4167"/>
        <dbReference type="ChEBI" id="CHEBI:15378"/>
        <dbReference type="ChEBI" id="CHEBI:30616"/>
        <dbReference type="ChEBI" id="CHEBI:61548"/>
        <dbReference type="ChEBI" id="CHEBI:456216"/>
        <dbReference type="EC" id="2.7.1.2"/>
    </reaction>
</comment>
<comment type="subcellular location">
    <subcellularLocation>
        <location evidence="1">Cytoplasm</location>
    </subcellularLocation>
</comment>
<comment type="similarity">
    <text evidence="1">Belongs to the bacterial glucokinase family.</text>
</comment>
<feature type="chain" id="PRO_1000081693" description="Glucokinase">
    <location>
        <begin position="1"/>
        <end position="332"/>
    </location>
</feature>
<feature type="binding site" evidence="1">
    <location>
        <begin position="15"/>
        <end position="20"/>
    </location>
    <ligand>
        <name>ATP</name>
        <dbReference type="ChEBI" id="CHEBI:30616"/>
    </ligand>
</feature>
<sequence length="332" mass="36153">MSISQNKKSYPRLLADIGGTNARFALEVEANIIKNIEIFPCNDYNTVVDAVKVYLNKFGNPTIKYGAFAIANPVVGDWVQMTNHHWAFSIETTRQALNLEVLILINDFTAQAYAISRMSSSELIQIGGNFCTINAPKAVLGPGTGLGVSGLIPCGNGDYIALSGEGGHTSFSPFDDTEVMIWQYAKKKYGHVSTERFLSGSGLVLIYEALADREGIKSAKISPELISEQALSGKSPLCRLTLDIFCAMLGTISADLALTLGARGGVYLCGGIIPRFIDYFKTSPFRVRFEDKGRFDAYLAAIPVYVVLAKYPGIFGVAVALENHLKDYFSKK</sequence>
<proteinExistence type="inferred from homology"/>
<keyword id="KW-0067">ATP-binding</keyword>
<keyword id="KW-0963">Cytoplasm</keyword>
<keyword id="KW-0324">Glycolysis</keyword>
<keyword id="KW-0418">Kinase</keyword>
<keyword id="KW-0547">Nucleotide-binding</keyword>
<keyword id="KW-0808">Transferase</keyword>
<accession>A7H492</accession>
<name>GLK_CAMJD</name>
<dbReference type="EC" id="2.7.1.2" evidence="1"/>
<dbReference type="EMBL" id="CP000768">
    <property type="protein sequence ID" value="ABS44717.1"/>
    <property type="molecule type" value="Genomic_DNA"/>
</dbReference>
<dbReference type="SMR" id="A7H492"/>
<dbReference type="KEGG" id="cjd:JJD26997_1268"/>
<dbReference type="HOGENOM" id="CLU_042582_1_0_7"/>
<dbReference type="Proteomes" id="UP000002302">
    <property type="component" value="Chromosome"/>
</dbReference>
<dbReference type="GO" id="GO:0005829">
    <property type="term" value="C:cytosol"/>
    <property type="evidence" value="ECO:0007669"/>
    <property type="project" value="TreeGrafter"/>
</dbReference>
<dbReference type="GO" id="GO:0005524">
    <property type="term" value="F:ATP binding"/>
    <property type="evidence" value="ECO:0007669"/>
    <property type="project" value="UniProtKB-UniRule"/>
</dbReference>
<dbReference type="GO" id="GO:0005536">
    <property type="term" value="F:D-glucose binding"/>
    <property type="evidence" value="ECO:0007669"/>
    <property type="project" value="InterPro"/>
</dbReference>
<dbReference type="GO" id="GO:0004340">
    <property type="term" value="F:glucokinase activity"/>
    <property type="evidence" value="ECO:0007669"/>
    <property type="project" value="UniProtKB-UniRule"/>
</dbReference>
<dbReference type="GO" id="GO:0006096">
    <property type="term" value="P:glycolytic process"/>
    <property type="evidence" value="ECO:0007669"/>
    <property type="project" value="UniProtKB-UniRule"/>
</dbReference>
<dbReference type="CDD" id="cd24008">
    <property type="entry name" value="ASKHA_NBD_GLK"/>
    <property type="match status" value="1"/>
</dbReference>
<dbReference type="FunFam" id="3.40.367.20:FF:000002">
    <property type="entry name" value="Glucokinase"/>
    <property type="match status" value="1"/>
</dbReference>
<dbReference type="Gene3D" id="3.30.420.40">
    <property type="match status" value="1"/>
</dbReference>
<dbReference type="Gene3D" id="3.40.367.20">
    <property type="match status" value="1"/>
</dbReference>
<dbReference type="HAMAP" id="MF_00524">
    <property type="entry name" value="Glucokinase"/>
    <property type="match status" value="1"/>
</dbReference>
<dbReference type="InterPro" id="IPR043129">
    <property type="entry name" value="ATPase_NBD"/>
</dbReference>
<dbReference type="InterPro" id="IPR050201">
    <property type="entry name" value="Bacterial_glucokinase"/>
</dbReference>
<dbReference type="InterPro" id="IPR003836">
    <property type="entry name" value="Glucokinase"/>
</dbReference>
<dbReference type="NCBIfam" id="TIGR00749">
    <property type="entry name" value="glk"/>
    <property type="match status" value="1"/>
</dbReference>
<dbReference type="NCBIfam" id="NF001416">
    <property type="entry name" value="PRK00292.1-3"/>
    <property type="match status" value="1"/>
</dbReference>
<dbReference type="PANTHER" id="PTHR47690">
    <property type="entry name" value="GLUCOKINASE"/>
    <property type="match status" value="1"/>
</dbReference>
<dbReference type="PANTHER" id="PTHR47690:SF1">
    <property type="entry name" value="GLUCOKINASE"/>
    <property type="match status" value="1"/>
</dbReference>
<dbReference type="Pfam" id="PF02685">
    <property type="entry name" value="Glucokinase"/>
    <property type="match status" value="1"/>
</dbReference>
<dbReference type="SUPFAM" id="SSF53067">
    <property type="entry name" value="Actin-like ATPase domain"/>
    <property type="match status" value="1"/>
</dbReference>
<organism>
    <name type="scientific">Campylobacter jejuni subsp. doylei (strain ATCC BAA-1458 / RM4099 / 269.97)</name>
    <dbReference type="NCBI Taxonomy" id="360109"/>
    <lineage>
        <taxon>Bacteria</taxon>
        <taxon>Pseudomonadati</taxon>
        <taxon>Campylobacterota</taxon>
        <taxon>Epsilonproteobacteria</taxon>
        <taxon>Campylobacterales</taxon>
        <taxon>Campylobacteraceae</taxon>
        <taxon>Campylobacter</taxon>
    </lineage>
</organism>
<reference key="1">
    <citation type="submission" date="2007-07" db="EMBL/GenBank/DDBJ databases">
        <title>Complete genome sequence of Campylobacter jejuni subsp doylei 269.97 isolated from human blood.</title>
        <authorList>
            <person name="Fouts D.E."/>
            <person name="Mongodin E.F."/>
            <person name="Puiu D."/>
            <person name="Sebastian Y."/>
            <person name="Miller W.G."/>
            <person name="Mandrell R.E."/>
            <person name="Lastovica A.J."/>
            <person name="Nelson K.E."/>
        </authorList>
    </citation>
    <scope>NUCLEOTIDE SEQUENCE [LARGE SCALE GENOMIC DNA]</scope>
    <source>
        <strain>ATCC BAA-1458 / RM4099 / 269.97</strain>
    </source>
</reference>
<protein>
    <recommendedName>
        <fullName evidence="1">Glucokinase</fullName>
        <ecNumber evidence="1">2.7.1.2</ecNumber>
    </recommendedName>
    <alternativeName>
        <fullName evidence="1">Glucose kinase</fullName>
    </alternativeName>
</protein>
<gene>
    <name evidence="1" type="primary">glk</name>
    <name type="ordered locus">JJD26997_1268</name>
</gene>
<evidence type="ECO:0000255" key="1">
    <source>
        <dbReference type="HAMAP-Rule" id="MF_00524"/>
    </source>
</evidence>